<organism>
    <name type="scientific">Sorghum bicolor</name>
    <name type="common">Sorghum</name>
    <name type="synonym">Sorghum vulgare</name>
    <dbReference type="NCBI Taxonomy" id="4558"/>
    <lineage>
        <taxon>Eukaryota</taxon>
        <taxon>Viridiplantae</taxon>
        <taxon>Streptophyta</taxon>
        <taxon>Embryophyta</taxon>
        <taxon>Tracheophyta</taxon>
        <taxon>Spermatophyta</taxon>
        <taxon>Magnoliopsida</taxon>
        <taxon>Liliopsida</taxon>
        <taxon>Poales</taxon>
        <taxon>Poaceae</taxon>
        <taxon>PACMAD clade</taxon>
        <taxon>Panicoideae</taxon>
        <taxon>Andropogonodae</taxon>
        <taxon>Andropogoneae</taxon>
        <taxon>Sorghinae</taxon>
        <taxon>Sorghum</taxon>
    </lineage>
</organism>
<keyword id="KW-1003">Cell membrane</keyword>
<keyword id="KW-0472">Membrane</keyword>
<keyword id="KW-1185">Reference proteome</keyword>
<keyword id="KW-0812">Transmembrane</keyword>
<keyword id="KW-1133">Transmembrane helix</keyword>
<protein>
    <recommendedName>
        <fullName>CASP-like protein 2A1</fullName>
        <shortName>SbCASPL2A1</shortName>
    </recommendedName>
</protein>
<name>CSPLG_SORBI</name>
<feature type="chain" id="PRO_0000391566" description="CASP-like protein 2A1">
    <location>
        <begin position="1"/>
        <end position="208"/>
    </location>
</feature>
<feature type="topological domain" description="Cytoplasmic" evidence="2">
    <location>
        <begin position="1"/>
        <end position="36"/>
    </location>
</feature>
<feature type="transmembrane region" description="Helical" evidence="2">
    <location>
        <begin position="37"/>
        <end position="57"/>
    </location>
</feature>
<feature type="topological domain" description="Extracellular" evidence="2">
    <location>
        <begin position="58"/>
        <end position="78"/>
    </location>
</feature>
<feature type="transmembrane region" description="Helical" evidence="2">
    <location>
        <begin position="79"/>
        <end position="99"/>
    </location>
</feature>
<feature type="topological domain" description="Cytoplasmic" evidence="2">
    <location>
        <begin position="100"/>
        <end position="108"/>
    </location>
</feature>
<feature type="transmembrane region" description="Helical" evidence="2">
    <location>
        <begin position="109"/>
        <end position="129"/>
    </location>
</feature>
<feature type="topological domain" description="Extracellular" evidence="2">
    <location>
        <begin position="130"/>
        <end position="161"/>
    </location>
</feature>
<feature type="transmembrane region" description="Helical" evidence="2">
    <location>
        <begin position="162"/>
        <end position="182"/>
    </location>
</feature>
<feature type="topological domain" description="Cytoplasmic" evidence="2">
    <location>
        <begin position="183"/>
        <end position="208"/>
    </location>
</feature>
<comment type="subunit">
    <text evidence="1">Homodimer and heterodimers.</text>
</comment>
<comment type="subcellular location">
    <subcellularLocation>
        <location evidence="1">Cell membrane</location>
        <topology evidence="1">Multi-pass membrane protein</topology>
    </subcellularLocation>
</comment>
<comment type="similarity">
    <text evidence="3">Belongs to the Casparian strip membrane proteins (CASP) family.</text>
</comment>
<sequence length="208" mass="21786">MSKMAEQKAAAVDGLGGAGAADAAPAGEAAAARVRPVETLLRAAPLGLCVAAMTVMLRDQQSNEYGTVAYSDLGGFKYLVYANGLCAAYSLVSAFYTAVPRPATVSRSWVVFLLDQVFTYLILAAGAAAAELLYLAYNGDKEVTWSEACGVFGSFCRQARTSVAITFGTVLCFILLSLISSYRLFSAYEAPPSSALGSKGVEIAAYPR</sequence>
<proteinExistence type="evidence at transcript level"/>
<reference key="1">
    <citation type="journal article" date="2009" name="Nature">
        <title>The Sorghum bicolor genome and the diversification of grasses.</title>
        <authorList>
            <person name="Paterson A.H."/>
            <person name="Bowers J.E."/>
            <person name="Bruggmann R."/>
            <person name="Dubchak I."/>
            <person name="Grimwood J."/>
            <person name="Gundlach H."/>
            <person name="Haberer G."/>
            <person name="Hellsten U."/>
            <person name="Mitros T."/>
            <person name="Poliakov A."/>
            <person name="Schmutz J."/>
            <person name="Spannagl M."/>
            <person name="Tang H."/>
            <person name="Wang X."/>
            <person name="Wicker T."/>
            <person name="Bharti A.K."/>
            <person name="Chapman J."/>
            <person name="Feltus F.A."/>
            <person name="Gowik U."/>
            <person name="Grigoriev I.V."/>
            <person name="Lyons E."/>
            <person name="Maher C.A."/>
            <person name="Martis M."/>
            <person name="Narechania A."/>
            <person name="Otillar R.P."/>
            <person name="Penning B.W."/>
            <person name="Salamov A.A."/>
            <person name="Wang Y."/>
            <person name="Zhang L."/>
            <person name="Carpita N.C."/>
            <person name="Freeling M."/>
            <person name="Gingle A.R."/>
            <person name="Hash C.T."/>
            <person name="Keller B."/>
            <person name="Klein P."/>
            <person name="Kresovich S."/>
            <person name="McCann M.C."/>
            <person name="Ming R."/>
            <person name="Peterson D.G."/>
            <person name="Mehboob-ur-Rahman M."/>
            <person name="Ware D."/>
            <person name="Westhoff P."/>
            <person name="Mayer K.F.X."/>
            <person name="Messing J."/>
            <person name="Rokhsar D.S."/>
        </authorList>
    </citation>
    <scope>NUCLEOTIDE SEQUENCE [LARGE SCALE GENOMIC DNA]</scope>
    <source>
        <strain>cv. BTx623</strain>
    </source>
</reference>
<reference key="2">
    <citation type="journal article" date="2018" name="Plant J.">
        <title>The Sorghum bicolor reference genome: improved assembly, gene annotations, a transcriptome atlas, and signatures of genome organization.</title>
        <authorList>
            <person name="McCormick R.F."/>
            <person name="Truong S.K."/>
            <person name="Sreedasyam A."/>
            <person name="Jenkins J."/>
            <person name="Shu S."/>
            <person name="Sims D."/>
            <person name="Kennedy M."/>
            <person name="Amirebrahimi M."/>
            <person name="Weers B.D."/>
            <person name="McKinley B."/>
            <person name="Mattison A."/>
            <person name="Morishige D.T."/>
            <person name="Grimwood J."/>
            <person name="Schmutz J."/>
            <person name="Mullet J.E."/>
        </authorList>
    </citation>
    <scope>GENOME REANNOTATION</scope>
    <source>
        <strain>cv. BTx623</strain>
    </source>
</reference>
<reference key="3">
    <citation type="journal article" date="2014" name="Plant Physiol.">
        <title>Functional and evolutionary analysis of the CASPARIAN STRIP MEMBRANE DOMAIN PROTEIN family.</title>
        <authorList>
            <person name="Roppolo D."/>
            <person name="Boeckmann B."/>
            <person name="Pfister A."/>
            <person name="Boutet E."/>
            <person name="Rubio M.C."/>
            <person name="Denervaud-Tendon V."/>
            <person name="Vermeer J.E."/>
            <person name="Gheyselinck J."/>
            <person name="Xenarios I."/>
            <person name="Geldner N."/>
        </authorList>
    </citation>
    <scope>GENE FAMILY</scope>
    <scope>NOMENCLATURE</scope>
</reference>
<accession>C5YDQ9</accession>
<dbReference type="EMBL" id="CM000765">
    <property type="protein sequence ID" value="EES11923.1"/>
    <property type="molecule type" value="Genomic_DNA"/>
</dbReference>
<dbReference type="RefSeq" id="XP_002447595.1">
    <property type="nucleotide sequence ID" value="XM_002447550.1"/>
</dbReference>
<dbReference type="FunCoup" id="C5YDQ9">
    <property type="interactions" value="1476"/>
</dbReference>
<dbReference type="STRING" id="4558.C5YDQ9"/>
<dbReference type="EnsemblPlants" id="EES11923">
    <property type="protein sequence ID" value="EES11923"/>
    <property type="gene ID" value="SORBI_3006G037300"/>
</dbReference>
<dbReference type="Gramene" id="EES11923">
    <property type="protein sequence ID" value="EES11923"/>
    <property type="gene ID" value="SORBI_3006G037300"/>
</dbReference>
<dbReference type="KEGG" id="sbi:8069443"/>
<dbReference type="eggNOG" id="ENOG502S0J7">
    <property type="taxonomic scope" value="Eukaryota"/>
</dbReference>
<dbReference type="HOGENOM" id="CLU_066104_2_2_1"/>
<dbReference type="InParanoid" id="C5YDQ9"/>
<dbReference type="OMA" id="TWSQACG"/>
<dbReference type="OrthoDB" id="749363at2759"/>
<dbReference type="Proteomes" id="UP000000768">
    <property type="component" value="Chromosome 6"/>
</dbReference>
<dbReference type="GO" id="GO:0005886">
    <property type="term" value="C:plasma membrane"/>
    <property type="evidence" value="ECO:0007669"/>
    <property type="project" value="UniProtKB-SubCell"/>
</dbReference>
<dbReference type="InterPro" id="IPR006459">
    <property type="entry name" value="CASP/CASPL"/>
</dbReference>
<dbReference type="InterPro" id="IPR006702">
    <property type="entry name" value="CASP_dom"/>
</dbReference>
<dbReference type="NCBIfam" id="TIGR01569">
    <property type="entry name" value="A_tha_TIGR01569"/>
    <property type="match status" value="1"/>
</dbReference>
<dbReference type="PANTHER" id="PTHR33573:SF46">
    <property type="entry name" value="CASP-LIKE PROTEIN 2A1"/>
    <property type="match status" value="1"/>
</dbReference>
<dbReference type="PANTHER" id="PTHR33573">
    <property type="entry name" value="CASP-LIKE PROTEIN 4A4"/>
    <property type="match status" value="1"/>
</dbReference>
<dbReference type="Pfam" id="PF04535">
    <property type="entry name" value="CASP_dom"/>
    <property type="match status" value="1"/>
</dbReference>
<evidence type="ECO:0000250" key="1"/>
<evidence type="ECO:0000255" key="2"/>
<evidence type="ECO:0000305" key="3"/>
<gene>
    <name type="ordered locus">Sb06g005640</name>
</gene>